<sequence length="290" mass="32122">MLARFPLYLRLVRMDKPIGSLLLLWPTLNALWIASDGHPRWPLLAIFALGTLLMRSAGCAMNDYADRDFDRHVKRTADRPLTSGKIRAWEAVAIAVVLAFISFLLIQPLNTLTKELSVVALFVAGSYPFMKRFFAIPQAYLGIAFGFGIPMAFAAVQDTVPMLAWVMLIANIFWSVAYDTEYAMVDRDDDIKIGIRTSALTFGRFDVAAVMLCYAATLGIYVWIGVTLGFGLAYWAGWAAAVGCALYHYTLIKDRERMPCFAAFRHNNWLGGVLFAGIAAHYLLAGTAGN</sequence>
<name>UBIA_BURA4</name>
<evidence type="ECO:0000255" key="1">
    <source>
        <dbReference type="HAMAP-Rule" id="MF_01635"/>
    </source>
</evidence>
<dbReference type="EC" id="2.5.1.39" evidence="1"/>
<dbReference type="EMBL" id="CP001025">
    <property type="protein sequence ID" value="ACB63142.1"/>
    <property type="molecule type" value="Genomic_DNA"/>
</dbReference>
<dbReference type="RefSeq" id="WP_012363135.1">
    <property type="nucleotide sequence ID" value="NC_010551.1"/>
</dbReference>
<dbReference type="SMR" id="B1YTH7"/>
<dbReference type="KEGG" id="bac:BamMC406_0645"/>
<dbReference type="HOGENOM" id="CLU_034879_1_0_4"/>
<dbReference type="OrthoDB" id="9782418at2"/>
<dbReference type="UniPathway" id="UPA00232"/>
<dbReference type="Proteomes" id="UP000001680">
    <property type="component" value="Chromosome 1"/>
</dbReference>
<dbReference type="GO" id="GO:0005886">
    <property type="term" value="C:plasma membrane"/>
    <property type="evidence" value="ECO:0007669"/>
    <property type="project" value="UniProtKB-SubCell"/>
</dbReference>
<dbReference type="GO" id="GO:0008412">
    <property type="term" value="F:4-hydroxybenzoate polyprenyltransferase activity"/>
    <property type="evidence" value="ECO:0007669"/>
    <property type="project" value="UniProtKB-UniRule"/>
</dbReference>
<dbReference type="GO" id="GO:0006744">
    <property type="term" value="P:ubiquinone biosynthetic process"/>
    <property type="evidence" value="ECO:0007669"/>
    <property type="project" value="UniProtKB-UniRule"/>
</dbReference>
<dbReference type="CDD" id="cd13959">
    <property type="entry name" value="PT_UbiA_COQ2"/>
    <property type="match status" value="1"/>
</dbReference>
<dbReference type="FunFam" id="1.10.357.140:FF:000002">
    <property type="entry name" value="4-hydroxybenzoate octaprenyltransferase"/>
    <property type="match status" value="1"/>
</dbReference>
<dbReference type="FunFam" id="1.20.120.1780:FF:000001">
    <property type="entry name" value="4-hydroxybenzoate octaprenyltransferase"/>
    <property type="match status" value="1"/>
</dbReference>
<dbReference type="Gene3D" id="1.10.357.140">
    <property type="entry name" value="UbiA prenyltransferase"/>
    <property type="match status" value="1"/>
</dbReference>
<dbReference type="Gene3D" id="1.20.120.1780">
    <property type="entry name" value="UbiA prenyltransferase"/>
    <property type="match status" value="1"/>
</dbReference>
<dbReference type="HAMAP" id="MF_01635">
    <property type="entry name" value="UbiA"/>
    <property type="match status" value="1"/>
</dbReference>
<dbReference type="InterPro" id="IPR006370">
    <property type="entry name" value="HB_polyprenyltransferase-like"/>
</dbReference>
<dbReference type="InterPro" id="IPR039653">
    <property type="entry name" value="Prenyltransferase"/>
</dbReference>
<dbReference type="InterPro" id="IPR000537">
    <property type="entry name" value="UbiA_prenyltransferase"/>
</dbReference>
<dbReference type="InterPro" id="IPR030470">
    <property type="entry name" value="UbiA_prenylTrfase_CS"/>
</dbReference>
<dbReference type="InterPro" id="IPR044878">
    <property type="entry name" value="UbiA_sf"/>
</dbReference>
<dbReference type="NCBIfam" id="TIGR01474">
    <property type="entry name" value="ubiA_proteo"/>
    <property type="match status" value="1"/>
</dbReference>
<dbReference type="PANTHER" id="PTHR11048:SF28">
    <property type="entry name" value="4-HYDROXYBENZOATE POLYPRENYLTRANSFERASE, MITOCHONDRIAL"/>
    <property type="match status" value="1"/>
</dbReference>
<dbReference type="PANTHER" id="PTHR11048">
    <property type="entry name" value="PRENYLTRANSFERASES"/>
    <property type="match status" value="1"/>
</dbReference>
<dbReference type="Pfam" id="PF01040">
    <property type="entry name" value="UbiA"/>
    <property type="match status" value="1"/>
</dbReference>
<dbReference type="PROSITE" id="PS00943">
    <property type="entry name" value="UBIA"/>
    <property type="match status" value="1"/>
</dbReference>
<protein>
    <recommendedName>
        <fullName evidence="1">4-hydroxybenzoate octaprenyltransferase</fullName>
        <ecNumber evidence="1">2.5.1.39</ecNumber>
    </recommendedName>
    <alternativeName>
        <fullName evidence="1">4-HB polyprenyltransferase</fullName>
    </alternativeName>
</protein>
<keyword id="KW-0997">Cell inner membrane</keyword>
<keyword id="KW-1003">Cell membrane</keyword>
<keyword id="KW-0460">Magnesium</keyword>
<keyword id="KW-0472">Membrane</keyword>
<keyword id="KW-0808">Transferase</keyword>
<keyword id="KW-0812">Transmembrane</keyword>
<keyword id="KW-1133">Transmembrane helix</keyword>
<keyword id="KW-0831">Ubiquinone biosynthesis</keyword>
<gene>
    <name evidence="1" type="primary">ubiA</name>
    <name type="ordered locus">BamMC406_0645</name>
</gene>
<reference key="1">
    <citation type="submission" date="2008-04" db="EMBL/GenBank/DDBJ databases">
        <title>Complete sequence of chromosome 1 of Burkholderia ambifaria MC40-6.</title>
        <authorList>
            <person name="Copeland A."/>
            <person name="Lucas S."/>
            <person name="Lapidus A."/>
            <person name="Glavina del Rio T."/>
            <person name="Dalin E."/>
            <person name="Tice H."/>
            <person name="Pitluck S."/>
            <person name="Chain P."/>
            <person name="Malfatti S."/>
            <person name="Shin M."/>
            <person name="Vergez L."/>
            <person name="Lang D."/>
            <person name="Schmutz J."/>
            <person name="Larimer F."/>
            <person name="Land M."/>
            <person name="Hauser L."/>
            <person name="Kyrpides N."/>
            <person name="Lykidis A."/>
            <person name="Ramette A."/>
            <person name="Konstantinidis K."/>
            <person name="Tiedje J."/>
            <person name="Richardson P."/>
        </authorList>
    </citation>
    <scope>NUCLEOTIDE SEQUENCE [LARGE SCALE GENOMIC DNA]</scope>
    <source>
        <strain>MC40-6</strain>
    </source>
</reference>
<proteinExistence type="inferred from homology"/>
<organism>
    <name type="scientific">Burkholderia ambifaria (strain MC40-6)</name>
    <dbReference type="NCBI Taxonomy" id="398577"/>
    <lineage>
        <taxon>Bacteria</taxon>
        <taxon>Pseudomonadati</taxon>
        <taxon>Pseudomonadota</taxon>
        <taxon>Betaproteobacteria</taxon>
        <taxon>Burkholderiales</taxon>
        <taxon>Burkholderiaceae</taxon>
        <taxon>Burkholderia</taxon>
        <taxon>Burkholderia cepacia complex</taxon>
    </lineage>
</organism>
<feature type="chain" id="PRO_1000186655" description="4-hydroxybenzoate octaprenyltransferase">
    <location>
        <begin position="1"/>
        <end position="290"/>
    </location>
</feature>
<feature type="transmembrane region" description="Helical" evidence="1">
    <location>
        <begin position="41"/>
        <end position="61"/>
    </location>
</feature>
<feature type="transmembrane region" description="Helical" evidence="1">
    <location>
        <begin position="89"/>
        <end position="109"/>
    </location>
</feature>
<feature type="transmembrane region" description="Helical" evidence="1">
    <location>
        <begin position="133"/>
        <end position="153"/>
    </location>
</feature>
<feature type="transmembrane region" description="Helical" evidence="1">
    <location>
        <begin position="158"/>
        <end position="178"/>
    </location>
</feature>
<feature type="transmembrane region" description="Helical" evidence="1">
    <location>
        <begin position="202"/>
        <end position="224"/>
    </location>
</feature>
<feature type="transmembrane region" description="Helical" evidence="1">
    <location>
        <begin position="269"/>
        <end position="289"/>
    </location>
</feature>
<comment type="function">
    <text evidence="1">Catalyzes the prenylation of para-hydroxybenzoate (PHB) with an all-trans polyprenyl group. Mediates the second step in the final reaction sequence of ubiquinone-8 (UQ-8) biosynthesis, which is the condensation of the polyisoprenoid side chain with PHB, generating the first membrane-bound Q intermediate 3-octaprenyl-4-hydroxybenzoate.</text>
</comment>
<comment type="catalytic activity">
    <reaction evidence="1">
        <text>all-trans-octaprenyl diphosphate + 4-hydroxybenzoate = 4-hydroxy-3-(all-trans-octaprenyl)benzoate + diphosphate</text>
        <dbReference type="Rhea" id="RHEA:27782"/>
        <dbReference type="ChEBI" id="CHEBI:1617"/>
        <dbReference type="ChEBI" id="CHEBI:17879"/>
        <dbReference type="ChEBI" id="CHEBI:33019"/>
        <dbReference type="ChEBI" id="CHEBI:57711"/>
        <dbReference type="EC" id="2.5.1.39"/>
    </reaction>
</comment>
<comment type="cofactor">
    <cofactor evidence="1">
        <name>Mg(2+)</name>
        <dbReference type="ChEBI" id="CHEBI:18420"/>
    </cofactor>
</comment>
<comment type="pathway">
    <text evidence="1">Cofactor biosynthesis; ubiquinone biosynthesis.</text>
</comment>
<comment type="subcellular location">
    <subcellularLocation>
        <location evidence="1">Cell inner membrane</location>
        <topology evidence="1">Multi-pass membrane protein</topology>
    </subcellularLocation>
</comment>
<comment type="similarity">
    <text evidence="1">Belongs to the UbiA prenyltransferase family.</text>
</comment>
<accession>B1YTH7</accession>